<comment type="function">
    <text evidence="1">Catalyzes the ATP-dependent amination of UTP to CTP with either L-glutamine or ammonia as the source of nitrogen. Regulates intracellular CTP levels through interactions with the four ribonucleotide triphosphates.</text>
</comment>
<comment type="catalytic activity">
    <reaction evidence="1">
        <text>UTP + L-glutamine + ATP + H2O = CTP + L-glutamate + ADP + phosphate + 2 H(+)</text>
        <dbReference type="Rhea" id="RHEA:26426"/>
        <dbReference type="ChEBI" id="CHEBI:15377"/>
        <dbReference type="ChEBI" id="CHEBI:15378"/>
        <dbReference type="ChEBI" id="CHEBI:29985"/>
        <dbReference type="ChEBI" id="CHEBI:30616"/>
        <dbReference type="ChEBI" id="CHEBI:37563"/>
        <dbReference type="ChEBI" id="CHEBI:43474"/>
        <dbReference type="ChEBI" id="CHEBI:46398"/>
        <dbReference type="ChEBI" id="CHEBI:58359"/>
        <dbReference type="ChEBI" id="CHEBI:456216"/>
        <dbReference type="EC" id="6.3.4.2"/>
    </reaction>
</comment>
<comment type="catalytic activity">
    <reaction evidence="1">
        <text>L-glutamine + H2O = L-glutamate + NH4(+)</text>
        <dbReference type="Rhea" id="RHEA:15889"/>
        <dbReference type="ChEBI" id="CHEBI:15377"/>
        <dbReference type="ChEBI" id="CHEBI:28938"/>
        <dbReference type="ChEBI" id="CHEBI:29985"/>
        <dbReference type="ChEBI" id="CHEBI:58359"/>
    </reaction>
</comment>
<comment type="catalytic activity">
    <reaction evidence="1">
        <text>UTP + NH4(+) + ATP = CTP + ADP + phosphate + 2 H(+)</text>
        <dbReference type="Rhea" id="RHEA:16597"/>
        <dbReference type="ChEBI" id="CHEBI:15378"/>
        <dbReference type="ChEBI" id="CHEBI:28938"/>
        <dbReference type="ChEBI" id="CHEBI:30616"/>
        <dbReference type="ChEBI" id="CHEBI:37563"/>
        <dbReference type="ChEBI" id="CHEBI:43474"/>
        <dbReference type="ChEBI" id="CHEBI:46398"/>
        <dbReference type="ChEBI" id="CHEBI:456216"/>
    </reaction>
</comment>
<comment type="activity regulation">
    <text evidence="1">Allosterically activated by GTP, when glutamine is the substrate; GTP has no effect on the reaction when ammonia is the substrate. The allosteric effector GTP functions by stabilizing the protein conformation that binds the tetrahedral intermediate(s) formed during glutamine hydrolysis. Inhibited by the product CTP, via allosteric rather than competitive inhibition.</text>
</comment>
<comment type="pathway">
    <text evidence="1">Pyrimidine metabolism; CTP biosynthesis via de novo pathway; CTP from UDP: step 2/2.</text>
</comment>
<comment type="subunit">
    <text evidence="1">Homotetramer.</text>
</comment>
<comment type="miscellaneous">
    <text evidence="1">CTPSs have evolved a hybrid strategy for distinguishing between UTP and CTP. The overlapping regions of the product feedback inhibitory and substrate sites recognize a common feature in both compounds, the triphosphate moiety. To differentiate isosteric substrate and product pyrimidine rings, an additional pocket far from the expected kinase/ligase catalytic site, specifically recognizes the cytosine and ribose portions of the product inhibitor.</text>
</comment>
<comment type="similarity">
    <text evidence="1">Belongs to the CTP synthase family.</text>
</comment>
<accession>C1CWM4</accession>
<proteinExistence type="inferred from homology"/>
<reference key="1">
    <citation type="journal article" date="2009" name="PLoS Genet.">
        <title>Alliance of proteomics and genomics to unravel the specificities of Sahara bacterium Deinococcus deserti.</title>
        <authorList>
            <person name="de Groot A."/>
            <person name="Dulermo R."/>
            <person name="Ortet P."/>
            <person name="Blanchard L."/>
            <person name="Guerin P."/>
            <person name="Fernandez B."/>
            <person name="Vacherie B."/>
            <person name="Dossat C."/>
            <person name="Jolivet E."/>
            <person name="Siguier P."/>
            <person name="Chandler M."/>
            <person name="Barakat M."/>
            <person name="Dedieu A."/>
            <person name="Barbe V."/>
            <person name="Heulin T."/>
            <person name="Sommer S."/>
            <person name="Achouak W."/>
            <person name="Armengaud J."/>
        </authorList>
    </citation>
    <scope>NUCLEOTIDE SEQUENCE [LARGE SCALE GENOMIC DNA]</scope>
    <source>
        <strain>DSM 17065 / CIP 109153 / LMG 22923 / VCD115</strain>
    </source>
</reference>
<keyword id="KW-0067">ATP-binding</keyword>
<keyword id="KW-0315">Glutamine amidotransferase</keyword>
<keyword id="KW-0436">Ligase</keyword>
<keyword id="KW-0460">Magnesium</keyword>
<keyword id="KW-0479">Metal-binding</keyword>
<keyword id="KW-0547">Nucleotide-binding</keyword>
<keyword id="KW-0665">Pyrimidine biosynthesis</keyword>
<keyword id="KW-1185">Reference proteome</keyword>
<feature type="chain" id="PRO_1000214009" description="CTP synthase">
    <location>
        <begin position="1"/>
        <end position="556"/>
    </location>
</feature>
<feature type="domain" description="Glutamine amidotransferase type-1" evidence="1">
    <location>
        <begin position="291"/>
        <end position="544"/>
    </location>
</feature>
<feature type="region of interest" description="Amidoligase domain" evidence="1">
    <location>
        <begin position="1"/>
        <end position="266"/>
    </location>
</feature>
<feature type="active site" description="Nucleophile; for glutamine hydrolysis" evidence="1">
    <location>
        <position position="383"/>
    </location>
</feature>
<feature type="active site" evidence="1">
    <location>
        <position position="517"/>
    </location>
</feature>
<feature type="active site" evidence="1">
    <location>
        <position position="519"/>
    </location>
</feature>
<feature type="binding site" evidence="1">
    <location>
        <position position="12"/>
    </location>
    <ligand>
        <name>CTP</name>
        <dbReference type="ChEBI" id="CHEBI:37563"/>
        <note>allosteric inhibitor</note>
    </ligand>
</feature>
<feature type="binding site" evidence="1">
    <location>
        <position position="12"/>
    </location>
    <ligand>
        <name>UTP</name>
        <dbReference type="ChEBI" id="CHEBI:46398"/>
    </ligand>
</feature>
<feature type="binding site" evidence="1">
    <location>
        <begin position="13"/>
        <end position="18"/>
    </location>
    <ligand>
        <name>ATP</name>
        <dbReference type="ChEBI" id="CHEBI:30616"/>
    </ligand>
</feature>
<feature type="binding site" evidence="1">
    <location>
        <position position="53"/>
    </location>
    <ligand>
        <name>L-glutamine</name>
        <dbReference type="ChEBI" id="CHEBI:58359"/>
    </ligand>
</feature>
<feature type="binding site" evidence="1">
    <location>
        <position position="70"/>
    </location>
    <ligand>
        <name>ATP</name>
        <dbReference type="ChEBI" id="CHEBI:30616"/>
    </ligand>
</feature>
<feature type="binding site" evidence="1">
    <location>
        <position position="70"/>
    </location>
    <ligand>
        <name>Mg(2+)</name>
        <dbReference type="ChEBI" id="CHEBI:18420"/>
    </ligand>
</feature>
<feature type="binding site" evidence="1">
    <location>
        <position position="140"/>
    </location>
    <ligand>
        <name>Mg(2+)</name>
        <dbReference type="ChEBI" id="CHEBI:18420"/>
    </ligand>
</feature>
<feature type="binding site" evidence="1">
    <location>
        <begin position="147"/>
        <end position="149"/>
    </location>
    <ligand>
        <name>CTP</name>
        <dbReference type="ChEBI" id="CHEBI:37563"/>
        <note>allosteric inhibitor</note>
    </ligand>
</feature>
<feature type="binding site" evidence="1">
    <location>
        <begin position="187"/>
        <end position="192"/>
    </location>
    <ligand>
        <name>CTP</name>
        <dbReference type="ChEBI" id="CHEBI:37563"/>
        <note>allosteric inhibitor</note>
    </ligand>
</feature>
<feature type="binding site" evidence="1">
    <location>
        <begin position="187"/>
        <end position="192"/>
    </location>
    <ligand>
        <name>UTP</name>
        <dbReference type="ChEBI" id="CHEBI:46398"/>
    </ligand>
</feature>
<feature type="binding site" evidence="1">
    <location>
        <position position="223"/>
    </location>
    <ligand>
        <name>CTP</name>
        <dbReference type="ChEBI" id="CHEBI:37563"/>
        <note>allosteric inhibitor</note>
    </ligand>
</feature>
<feature type="binding site" evidence="1">
    <location>
        <position position="223"/>
    </location>
    <ligand>
        <name>UTP</name>
        <dbReference type="ChEBI" id="CHEBI:46398"/>
    </ligand>
</feature>
<feature type="binding site" evidence="1">
    <location>
        <position position="356"/>
    </location>
    <ligand>
        <name>L-glutamine</name>
        <dbReference type="ChEBI" id="CHEBI:58359"/>
    </ligand>
</feature>
<feature type="binding site" evidence="1">
    <location>
        <begin position="384"/>
        <end position="387"/>
    </location>
    <ligand>
        <name>L-glutamine</name>
        <dbReference type="ChEBI" id="CHEBI:58359"/>
    </ligand>
</feature>
<feature type="binding site" evidence="1">
    <location>
        <position position="407"/>
    </location>
    <ligand>
        <name>L-glutamine</name>
        <dbReference type="ChEBI" id="CHEBI:58359"/>
    </ligand>
</feature>
<feature type="binding site" evidence="1">
    <location>
        <position position="467"/>
    </location>
    <ligand>
        <name>L-glutamine</name>
        <dbReference type="ChEBI" id="CHEBI:58359"/>
    </ligand>
</feature>
<name>PYRG_DEIDV</name>
<organism>
    <name type="scientific">Deinococcus deserti (strain DSM 17065 / CIP 109153 / LMG 22923 / VCD115)</name>
    <dbReference type="NCBI Taxonomy" id="546414"/>
    <lineage>
        <taxon>Bacteria</taxon>
        <taxon>Thermotogati</taxon>
        <taxon>Deinococcota</taxon>
        <taxon>Deinococci</taxon>
        <taxon>Deinococcales</taxon>
        <taxon>Deinococcaceae</taxon>
        <taxon>Deinococcus</taxon>
    </lineage>
</organism>
<dbReference type="EC" id="6.3.4.2" evidence="1"/>
<dbReference type="EMBL" id="CP001114">
    <property type="protein sequence ID" value="ACO46591.1"/>
    <property type="molecule type" value="Genomic_DNA"/>
</dbReference>
<dbReference type="RefSeq" id="WP_012693714.1">
    <property type="nucleotide sequence ID" value="NC_012526.1"/>
</dbReference>
<dbReference type="SMR" id="C1CWM4"/>
<dbReference type="STRING" id="546414.Deide_16230"/>
<dbReference type="MEROPS" id="C26.964"/>
<dbReference type="PaxDb" id="546414-Deide_16230"/>
<dbReference type="KEGG" id="ddr:Deide_16230"/>
<dbReference type="eggNOG" id="COG0504">
    <property type="taxonomic scope" value="Bacteria"/>
</dbReference>
<dbReference type="HOGENOM" id="CLU_011675_5_0_0"/>
<dbReference type="OrthoDB" id="9801107at2"/>
<dbReference type="UniPathway" id="UPA00159">
    <property type="reaction ID" value="UER00277"/>
</dbReference>
<dbReference type="Proteomes" id="UP000002208">
    <property type="component" value="Chromosome"/>
</dbReference>
<dbReference type="GO" id="GO:0005829">
    <property type="term" value="C:cytosol"/>
    <property type="evidence" value="ECO:0007669"/>
    <property type="project" value="TreeGrafter"/>
</dbReference>
<dbReference type="GO" id="GO:0005524">
    <property type="term" value="F:ATP binding"/>
    <property type="evidence" value="ECO:0007669"/>
    <property type="project" value="UniProtKB-KW"/>
</dbReference>
<dbReference type="GO" id="GO:0003883">
    <property type="term" value="F:CTP synthase activity"/>
    <property type="evidence" value="ECO:0007669"/>
    <property type="project" value="UniProtKB-UniRule"/>
</dbReference>
<dbReference type="GO" id="GO:0004359">
    <property type="term" value="F:glutaminase activity"/>
    <property type="evidence" value="ECO:0007669"/>
    <property type="project" value="RHEA"/>
</dbReference>
<dbReference type="GO" id="GO:0042802">
    <property type="term" value="F:identical protein binding"/>
    <property type="evidence" value="ECO:0007669"/>
    <property type="project" value="TreeGrafter"/>
</dbReference>
<dbReference type="GO" id="GO:0046872">
    <property type="term" value="F:metal ion binding"/>
    <property type="evidence" value="ECO:0007669"/>
    <property type="project" value="UniProtKB-KW"/>
</dbReference>
<dbReference type="GO" id="GO:0044210">
    <property type="term" value="P:'de novo' CTP biosynthetic process"/>
    <property type="evidence" value="ECO:0007669"/>
    <property type="project" value="UniProtKB-UniRule"/>
</dbReference>
<dbReference type="GO" id="GO:0019856">
    <property type="term" value="P:pyrimidine nucleobase biosynthetic process"/>
    <property type="evidence" value="ECO:0007669"/>
    <property type="project" value="TreeGrafter"/>
</dbReference>
<dbReference type="CDD" id="cd03113">
    <property type="entry name" value="CTPS_N"/>
    <property type="match status" value="1"/>
</dbReference>
<dbReference type="CDD" id="cd01746">
    <property type="entry name" value="GATase1_CTP_Synthase"/>
    <property type="match status" value="1"/>
</dbReference>
<dbReference type="FunFam" id="3.40.50.300:FF:000009">
    <property type="entry name" value="CTP synthase"/>
    <property type="match status" value="1"/>
</dbReference>
<dbReference type="FunFam" id="3.40.50.880:FF:000002">
    <property type="entry name" value="CTP synthase"/>
    <property type="match status" value="1"/>
</dbReference>
<dbReference type="Gene3D" id="3.40.50.880">
    <property type="match status" value="1"/>
</dbReference>
<dbReference type="Gene3D" id="3.40.50.300">
    <property type="entry name" value="P-loop containing nucleotide triphosphate hydrolases"/>
    <property type="match status" value="1"/>
</dbReference>
<dbReference type="HAMAP" id="MF_01227">
    <property type="entry name" value="PyrG"/>
    <property type="match status" value="1"/>
</dbReference>
<dbReference type="InterPro" id="IPR029062">
    <property type="entry name" value="Class_I_gatase-like"/>
</dbReference>
<dbReference type="InterPro" id="IPR004468">
    <property type="entry name" value="CTP_synthase"/>
</dbReference>
<dbReference type="InterPro" id="IPR017456">
    <property type="entry name" value="CTP_synthase_N"/>
</dbReference>
<dbReference type="InterPro" id="IPR017926">
    <property type="entry name" value="GATASE"/>
</dbReference>
<dbReference type="InterPro" id="IPR033828">
    <property type="entry name" value="GATase1_CTP_Synthase"/>
</dbReference>
<dbReference type="InterPro" id="IPR027417">
    <property type="entry name" value="P-loop_NTPase"/>
</dbReference>
<dbReference type="NCBIfam" id="NF003792">
    <property type="entry name" value="PRK05380.1"/>
    <property type="match status" value="1"/>
</dbReference>
<dbReference type="NCBIfam" id="TIGR00337">
    <property type="entry name" value="PyrG"/>
    <property type="match status" value="1"/>
</dbReference>
<dbReference type="PANTHER" id="PTHR11550">
    <property type="entry name" value="CTP SYNTHASE"/>
    <property type="match status" value="1"/>
</dbReference>
<dbReference type="PANTHER" id="PTHR11550:SF0">
    <property type="entry name" value="CTP SYNTHASE-RELATED"/>
    <property type="match status" value="1"/>
</dbReference>
<dbReference type="Pfam" id="PF06418">
    <property type="entry name" value="CTP_synth_N"/>
    <property type="match status" value="1"/>
</dbReference>
<dbReference type="Pfam" id="PF00117">
    <property type="entry name" value="GATase"/>
    <property type="match status" value="1"/>
</dbReference>
<dbReference type="SUPFAM" id="SSF52317">
    <property type="entry name" value="Class I glutamine amidotransferase-like"/>
    <property type="match status" value="1"/>
</dbReference>
<dbReference type="SUPFAM" id="SSF52540">
    <property type="entry name" value="P-loop containing nucleoside triphosphate hydrolases"/>
    <property type="match status" value="1"/>
</dbReference>
<dbReference type="PROSITE" id="PS51273">
    <property type="entry name" value="GATASE_TYPE_1"/>
    <property type="match status" value="1"/>
</dbReference>
<protein>
    <recommendedName>
        <fullName evidence="1">CTP synthase</fullName>
        <ecNumber evidence="1">6.3.4.2</ecNumber>
    </recommendedName>
    <alternativeName>
        <fullName evidence="1">Cytidine 5'-triphosphate synthase</fullName>
    </alternativeName>
    <alternativeName>
        <fullName evidence="1">Cytidine triphosphate synthetase</fullName>
        <shortName evidence="1">CTP synthetase</shortName>
        <shortName evidence="1">CTPS</shortName>
    </alternativeName>
    <alternativeName>
        <fullName evidence="1">UTP--ammonia ligase</fullName>
    </alternativeName>
</protein>
<gene>
    <name evidence="1" type="primary">pyrG</name>
    <name type="ordered locus">Deide_16230</name>
</gene>
<sequence length="556" mass="60019">MKYIFVTGGVVSSLGKGVASASLGALLRARGYKVTAVKIDPYINIDAGTMRPYEHGEVFVTASGAETDLDIGNYERFLDLDIPAGSNITTGQVYQEVIRKERAGDYLSQTVQVIPHVTDEIKRRIRVAGETAGAEIVLIEVGGTVGDIESLPFLEAIRQFKFDEGDENVLFLHLTLVPYLGTSNEFKTKPTQHSVATLRSVGISPDIVMVRSKTKLPPEITRKIALFTSVRENRVFSSYDVGHVYEVPLALEEQGLGKVVEDLLGLERTMPNLGVWTNAVRTIKQPTREVTIAIAGKYTEMPDAYLSLMESLTHAGIANDARVNIRWVNAEELTESGEGGLATQLGNADGILVPGGFGIRGIEGKIKAAEYARTRGVPYLGICLGMQIAVIEYARHVAGLEGANSAEFDEYAPHKVIDLMPEQLEVGGKGGTMRLGDWPMDLRGGTTIAELYGVPQGGTVKERHRHRYEVNPAYTEQLQDAGLTISGVTPGVAGRGAGLVESVEIAGHPFFVALQAHPEFKSRPMRPSPPFAGFVKAALRGQSSDEQGTEATTASV</sequence>
<evidence type="ECO:0000255" key="1">
    <source>
        <dbReference type="HAMAP-Rule" id="MF_01227"/>
    </source>
</evidence>